<keyword id="KW-0028">Amino-acid biosynthesis</keyword>
<keyword id="KW-0057">Aromatic amino acid biosynthesis</keyword>
<keyword id="KW-0456">Lyase</keyword>
<keyword id="KW-0704">Schiff base</keyword>
<gene>
    <name evidence="1" type="primary">aroD</name>
    <name type="ordered locus">SeD_A1985</name>
</gene>
<comment type="function">
    <text evidence="1">Involved in the third step of the chorismate pathway, which leads to the biosynthesis of aromatic amino acids. Catalyzes the cis-dehydration of 3-dehydroquinate (DHQ) and introduces the first double bond of the aromatic ring to yield 3-dehydroshikimate.</text>
</comment>
<comment type="catalytic activity">
    <reaction evidence="1">
        <text>3-dehydroquinate = 3-dehydroshikimate + H2O</text>
        <dbReference type="Rhea" id="RHEA:21096"/>
        <dbReference type="ChEBI" id="CHEBI:15377"/>
        <dbReference type="ChEBI" id="CHEBI:16630"/>
        <dbReference type="ChEBI" id="CHEBI:32364"/>
        <dbReference type="EC" id="4.2.1.10"/>
    </reaction>
</comment>
<comment type="pathway">
    <text evidence="1">Metabolic intermediate biosynthesis; chorismate biosynthesis; chorismate from D-erythrose 4-phosphate and phosphoenolpyruvate: step 3/7.</text>
</comment>
<comment type="subunit">
    <text evidence="1">Homodimer.</text>
</comment>
<comment type="similarity">
    <text evidence="1">Belongs to the type-I 3-dehydroquinase family.</text>
</comment>
<protein>
    <recommendedName>
        <fullName evidence="1">3-dehydroquinate dehydratase</fullName>
        <shortName evidence="1">3-dehydroquinase</shortName>
        <ecNumber evidence="1">4.2.1.10</ecNumber>
    </recommendedName>
    <alternativeName>
        <fullName evidence="1">Type I DHQase</fullName>
    </alternativeName>
    <alternativeName>
        <fullName evidence="1">Type I dehydroquinase</fullName>
        <shortName evidence="1">DHQ1</shortName>
    </alternativeName>
</protein>
<dbReference type="EC" id="4.2.1.10" evidence="1"/>
<dbReference type="EMBL" id="CP001144">
    <property type="protein sequence ID" value="ACH75488.1"/>
    <property type="molecule type" value="Genomic_DNA"/>
</dbReference>
<dbReference type="RefSeq" id="WP_000860224.1">
    <property type="nucleotide sequence ID" value="NC_011205.1"/>
</dbReference>
<dbReference type="SMR" id="B5FJ82"/>
<dbReference type="KEGG" id="sed:SeD_A1985"/>
<dbReference type="HOGENOM" id="CLU_064444_0_0_6"/>
<dbReference type="UniPathway" id="UPA00053">
    <property type="reaction ID" value="UER00086"/>
</dbReference>
<dbReference type="Proteomes" id="UP000008322">
    <property type="component" value="Chromosome"/>
</dbReference>
<dbReference type="GO" id="GO:0003855">
    <property type="term" value="F:3-dehydroquinate dehydratase activity"/>
    <property type="evidence" value="ECO:0007669"/>
    <property type="project" value="UniProtKB-UniRule"/>
</dbReference>
<dbReference type="GO" id="GO:0046279">
    <property type="term" value="P:3,4-dihydroxybenzoate biosynthetic process"/>
    <property type="evidence" value="ECO:0007669"/>
    <property type="project" value="TreeGrafter"/>
</dbReference>
<dbReference type="GO" id="GO:0008652">
    <property type="term" value="P:amino acid biosynthetic process"/>
    <property type="evidence" value="ECO:0007669"/>
    <property type="project" value="UniProtKB-KW"/>
</dbReference>
<dbReference type="GO" id="GO:0009073">
    <property type="term" value="P:aromatic amino acid family biosynthetic process"/>
    <property type="evidence" value="ECO:0007669"/>
    <property type="project" value="UniProtKB-KW"/>
</dbReference>
<dbReference type="GO" id="GO:0009423">
    <property type="term" value="P:chorismate biosynthetic process"/>
    <property type="evidence" value="ECO:0007669"/>
    <property type="project" value="UniProtKB-UniRule"/>
</dbReference>
<dbReference type="CDD" id="cd00502">
    <property type="entry name" value="DHQase_I"/>
    <property type="match status" value="1"/>
</dbReference>
<dbReference type="FunFam" id="3.20.20.70:FF:000047">
    <property type="entry name" value="3-dehydroquinate dehydratase"/>
    <property type="match status" value="1"/>
</dbReference>
<dbReference type="Gene3D" id="3.20.20.70">
    <property type="entry name" value="Aldolase class I"/>
    <property type="match status" value="1"/>
</dbReference>
<dbReference type="HAMAP" id="MF_00214">
    <property type="entry name" value="AroD"/>
    <property type="match status" value="1"/>
</dbReference>
<dbReference type="InterPro" id="IPR018508">
    <property type="entry name" value="3-dehydroquinate_DH_AS"/>
</dbReference>
<dbReference type="InterPro" id="IPR013785">
    <property type="entry name" value="Aldolase_TIM"/>
</dbReference>
<dbReference type="InterPro" id="IPR001381">
    <property type="entry name" value="DHquinase_I"/>
</dbReference>
<dbReference type="InterPro" id="IPR050146">
    <property type="entry name" value="Type-I_3-dehydroquinase"/>
</dbReference>
<dbReference type="NCBIfam" id="TIGR01093">
    <property type="entry name" value="aroD"/>
    <property type="match status" value="1"/>
</dbReference>
<dbReference type="PANTHER" id="PTHR43699">
    <property type="entry name" value="3-DEHYDROQUINATE DEHYDRATASE"/>
    <property type="match status" value="1"/>
</dbReference>
<dbReference type="PANTHER" id="PTHR43699:SF1">
    <property type="entry name" value="3-DEHYDROQUINATE DEHYDRATASE"/>
    <property type="match status" value="1"/>
</dbReference>
<dbReference type="Pfam" id="PF01487">
    <property type="entry name" value="DHquinase_I"/>
    <property type="match status" value="1"/>
</dbReference>
<dbReference type="SUPFAM" id="SSF51569">
    <property type="entry name" value="Aldolase"/>
    <property type="match status" value="1"/>
</dbReference>
<dbReference type="PROSITE" id="PS01028">
    <property type="entry name" value="DEHYDROQUINASE_I"/>
    <property type="match status" value="1"/>
</dbReference>
<reference key="1">
    <citation type="journal article" date="2011" name="J. Bacteriol.">
        <title>Comparative genomics of 28 Salmonella enterica isolates: evidence for CRISPR-mediated adaptive sublineage evolution.</title>
        <authorList>
            <person name="Fricke W.F."/>
            <person name="Mammel M.K."/>
            <person name="McDermott P.F."/>
            <person name="Tartera C."/>
            <person name="White D.G."/>
            <person name="Leclerc J.E."/>
            <person name="Ravel J."/>
            <person name="Cebula T.A."/>
        </authorList>
    </citation>
    <scope>NUCLEOTIDE SEQUENCE [LARGE SCALE GENOMIC DNA]</scope>
    <source>
        <strain>CT_02021853</strain>
    </source>
</reference>
<sequence length="252" mass="27281">MKTVTVRDLVVGEGAPKIIVSLMGKTITDVKSEALAYREADFDILEWRVDHFANVTTAESVLEAAGAIREIITDKPLLFTFRSAKEGGEQALTTGQYIALNRAAVDSGLVDMIDLELFTGDDEVKATVGYAHQHNVAVIMSNHDFHKTPAAEEIVQRLRKMQELGADIPKIAVMPQTKADVLTLLTATVEMQERYADRPIITMSMSKTGVISRLAGEVFGSAATFGAVKKASAPGQISVADLRTVLTILHQA</sequence>
<feature type="chain" id="PRO_1000099913" description="3-dehydroquinate dehydratase">
    <location>
        <begin position="1"/>
        <end position="252"/>
    </location>
</feature>
<feature type="active site" description="Proton donor/acceptor" evidence="1">
    <location>
        <position position="143"/>
    </location>
</feature>
<feature type="active site" description="Schiff-base intermediate with substrate" evidence="1">
    <location>
        <position position="170"/>
    </location>
</feature>
<feature type="binding site" evidence="1">
    <location>
        <position position="21"/>
    </location>
    <ligand>
        <name>3-dehydroquinate</name>
        <dbReference type="ChEBI" id="CHEBI:32364"/>
    </ligand>
</feature>
<feature type="binding site" evidence="1">
    <location>
        <begin position="46"/>
        <end position="48"/>
    </location>
    <ligand>
        <name>3-dehydroquinate</name>
        <dbReference type="ChEBI" id="CHEBI:32364"/>
    </ligand>
</feature>
<feature type="binding site" evidence="1">
    <location>
        <position position="82"/>
    </location>
    <ligand>
        <name>3-dehydroquinate</name>
        <dbReference type="ChEBI" id="CHEBI:32364"/>
    </ligand>
</feature>
<feature type="binding site" evidence="1">
    <location>
        <position position="213"/>
    </location>
    <ligand>
        <name>3-dehydroquinate</name>
        <dbReference type="ChEBI" id="CHEBI:32364"/>
    </ligand>
</feature>
<feature type="binding site" evidence="1">
    <location>
        <position position="232"/>
    </location>
    <ligand>
        <name>3-dehydroquinate</name>
        <dbReference type="ChEBI" id="CHEBI:32364"/>
    </ligand>
</feature>
<feature type="binding site" evidence="1">
    <location>
        <position position="236"/>
    </location>
    <ligand>
        <name>3-dehydroquinate</name>
        <dbReference type="ChEBI" id="CHEBI:32364"/>
    </ligand>
</feature>
<proteinExistence type="inferred from homology"/>
<evidence type="ECO:0000255" key="1">
    <source>
        <dbReference type="HAMAP-Rule" id="MF_00214"/>
    </source>
</evidence>
<organism>
    <name type="scientific">Salmonella dublin (strain CT_02021853)</name>
    <dbReference type="NCBI Taxonomy" id="439851"/>
    <lineage>
        <taxon>Bacteria</taxon>
        <taxon>Pseudomonadati</taxon>
        <taxon>Pseudomonadota</taxon>
        <taxon>Gammaproteobacteria</taxon>
        <taxon>Enterobacterales</taxon>
        <taxon>Enterobacteriaceae</taxon>
        <taxon>Salmonella</taxon>
    </lineage>
</organism>
<accession>B5FJ82</accession>
<name>AROD_SALDC</name>